<feature type="chain" id="PRO_0000202595" description="Vacuole transporter chaperone complex subunit 5">
    <location>
        <begin position="1"/>
        <end position="869"/>
    </location>
</feature>
<feature type="topological domain" description="Cytoplasmic" evidence="9">
    <location>
        <begin position="1"/>
        <end position="771"/>
    </location>
</feature>
<feature type="transmembrane region" description="Helical" evidence="1">
    <location>
        <begin position="772"/>
        <end position="792"/>
    </location>
</feature>
<feature type="topological domain" description="Vacuolar" evidence="8">
    <location>
        <begin position="793"/>
        <end position="810"/>
    </location>
</feature>
<feature type="transmembrane region" description="Helical" evidence="1">
    <location>
        <begin position="811"/>
        <end position="831"/>
    </location>
</feature>
<feature type="topological domain" description="Cytoplasmic" evidence="8">
    <location>
        <begin position="832"/>
        <end position="848"/>
    </location>
</feature>
<feature type="transmembrane region" description="Helical" evidence="1">
    <location>
        <begin position="849"/>
        <end position="869"/>
    </location>
</feature>
<feature type="domain" description="SPX" evidence="2">
    <location>
        <begin position="1"/>
        <end position="154"/>
    </location>
</feature>
<feature type="region of interest" description="Disordered" evidence="3">
    <location>
        <begin position="205"/>
        <end position="242"/>
    </location>
</feature>
<feature type="region of interest" description="Disordered" evidence="3">
    <location>
        <begin position="599"/>
        <end position="629"/>
    </location>
</feature>
<feature type="compositionally biased region" description="Polar residues" evidence="3">
    <location>
        <begin position="223"/>
        <end position="236"/>
    </location>
</feature>
<feature type="modified residue" description="Phosphoserine" evidence="11">
    <location>
        <position position="238"/>
    </location>
</feature>
<feature type="modified residue" description="Phosphoserine" evidence="10">
    <location>
        <position position="241"/>
    </location>
</feature>
<feature type="modified residue" description="Phosphoserine" evidence="10 11">
    <location>
        <position position="316"/>
    </location>
</feature>
<feature type="modified residue" description="Phosphoserine" evidence="11">
    <location>
        <position position="324"/>
    </location>
</feature>
<feature type="modified residue" description="Phosphoserine" evidence="10 11">
    <location>
        <position position="327"/>
    </location>
</feature>
<feature type="modified residue" description="Phosphoserine" evidence="11">
    <location>
        <position position="609"/>
    </location>
</feature>
<feature type="modified residue" description="Phosphoserine" evidence="11">
    <location>
        <position position="612"/>
    </location>
</feature>
<feature type="modified residue" description="Phosphoserine" evidence="10 11">
    <location>
        <position position="668"/>
    </location>
</feature>
<feature type="modified residue" description="Phosphoserine" evidence="11">
    <location>
        <position position="760"/>
    </location>
</feature>
<gene>
    <name evidence="7" type="primary">VTC5</name>
    <name type="ordered locus">YDR089W</name>
    <name type="ORF">D4495</name>
    <name type="ORF">YD8554.22</name>
</gene>
<comment type="function">
    <text evidence="5 9">Regulatory subunit of the vacuolar transporter chaperone (VTC) complex (PubMed:27587415). The VTC complex acts as a vacuolar polyphosphate polymerase that catalyzes the synthesis of inorganic polyphosphate (polyP) via transfer of phosphate from ATP to a growing polyP chain, releasing ADP. VTC exposes its catalytic domain VTC4 to the cytosol, where the growing polyP chain winds through a tunnel-shaped pocket, integrating cytoplasmic polymer synthesis with polyP membrane translocation (Probable). The VTC complex carries 9 vacuolar transmembrane domains, which are likely to constitute the translocation channel into the organelle lumen (Probable). PolyP synthesis is tightly coupled to its transport into the vacuole lumen, in order to avoid otherwise toxic intermediates in the cytosol, and it depends on the proton gradient across the membrane, formed by V-ATPase (Probable). VTC5 interacts with the VTC complex to increase the rate of polyP production (PubMed:27587415).</text>
</comment>
<comment type="subunit">
    <text evidence="5">The VTC core complex is an integral membrane heterooligomer composed of the catalytic subunit VTC4 and the accessory subunits VTC1, VTC2 and VTC3. The complex exists in 2 different sub-complexes: VTC1-VTC2-VCT4 and VCT1-VTC3-VTC4. The VCT1-VTC3-VTC4 subcomplex is mostly found on the vacuolar membrane. The VTC1-VTC2-VCT4 subcomplex is observed in the cell periphery, probably ER and nuclear envelope, but localizes to the vacuole under phosphate starvation. Each subunit contains 3 transmembrane helices. VTC1 is a small membrane protein without hydrophilic domain. VTC2, VTC3 and VTC4 are related and have 2 hydrophilic domains that face the cytosol, an N-terminal SPX domain and the central core domain. The central core in VTC4 is the catalytic domain, with the essential catalytic lysine replaced by isoleucine and leucine in VTC2 and VTC3, respectively. The core complex associates with the regulatory subunit VTC5.</text>
</comment>
<comment type="subcellular location">
    <subcellularLocation>
        <location evidence="5 6">Vacuole membrane</location>
        <topology evidence="1">Multi-pass membrane protein</topology>
    </subcellularLocation>
    <text evidence="6">Localized to the vacuole membrane by the AP-3 complex. Membrane localization is required for VTC5 to promote VTC activity.</text>
</comment>
<comment type="miscellaneous">
    <text evidence="4">Present with 172 molecules/cell in log phase SD medium.</text>
</comment>
<reference key="1">
    <citation type="journal article" date="1997" name="Nature">
        <title>The nucleotide sequence of Saccharomyces cerevisiae chromosome IV.</title>
        <authorList>
            <person name="Jacq C."/>
            <person name="Alt-Moerbe J."/>
            <person name="Andre B."/>
            <person name="Arnold W."/>
            <person name="Bahr A."/>
            <person name="Ballesta J.P.G."/>
            <person name="Bargues M."/>
            <person name="Baron L."/>
            <person name="Becker A."/>
            <person name="Biteau N."/>
            <person name="Bloecker H."/>
            <person name="Blugeon C."/>
            <person name="Boskovic J."/>
            <person name="Brandt P."/>
            <person name="Brueckner M."/>
            <person name="Buitrago M.J."/>
            <person name="Coster F."/>
            <person name="Delaveau T."/>
            <person name="del Rey F."/>
            <person name="Dujon B."/>
            <person name="Eide L.G."/>
            <person name="Garcia-Cantalejo J.M."/>
            <person name="Goffeau A."/>
            <person name="Gomez-Peris A."/>
            <person name="Granotier C."/>
            <person name="Hanemann V."/>
            <person name="Hankeln T."/>
            <person name="Hoheisel J.D."/>
            <person name="Jaeger W."/>
            <person name="Jimenez A."/>
            <person name="Jonniaux J.-L."/>
            <person name="Kraemer C."/>
            <person name="Kuester H."/>
            <person name="Laamanen P."/>
            <person name="Legros Y."/>
            <person name="Louis E.J."/>
            <person name="Moeller-Rieker S."/>
            <person name="Monnet A."/>
            <person name="Moro M."/>
            <person name="Mueller-Auer S."/>
            <person name="Nussbaumer B."/>
            <person name="Paricio N."/>
            <person name="Paulin L."/>
            <person name="Perea J."/>
            <person name="Perez-Alonso M."/>
            <person name="Perez-Ortin J.E."/>
            <person name="Pohl T.M."/>
            <person name="Prydz H."/>
            <person name="Purnelle B."/>
            <person name="Rasmussen S.W."/>
            <person name="Remacha M.A."/>
            <person name="Revuelta J.L."/>
            <person name="Rieger M."/>
            <person name="Salom D."/>
            <person name="Saluz H.P."/>
            <person name="Saiz J.E."/>
            <person name="Saren A.-M."/>
            <person name="Schaefer M."/>
            <person name="Scharfe M."/>
            <person name="Schmidt E.R."/>
            <person name="Schneider C."/>
            <person name="Scholler P."/>
            <person name="Schwarz S."/>
            <person name="Soler-Mira A."/>
            <person name="Urrestarazu L.A."/>
            <person name="Verhasselt P."/>
            <person name="Vissers S."/>
            <person name="Voet M."/>
            <person name="Volckaert G."/>
            <person name="Wagner G."/>
            <person name="Wambutt R."/>
            <person name="Wedler E."/>
            <person name="Wedler H."/>
            <person name="Woelfl S."/>
            <person name="Harris D.E."/>
            <person name="Bowman S."/>
            <person name="Brown D."/>
            <person name="Churcher C.M."/>
            <person name="Connor R."/>
            <person name="Dedman K."/>
            <person name="Gentles S."/>
            <person name="Hamlin N."/>
            <person name="Hunt S."/>
            <person name="Jones L."/>
            <person name="McDonald S."/>
            <person name="Murphy L.D."/>
            <person name="Niblett D."/>
            <person name="Odell C."/>
            <person name="Oliver K."/>
            <person name="Rajandream M.A."/>
            <person name="Richards C."/>
            <person name="Shore L."/>
            <person name="Walsh S.V."/>
            <person name="Barrell B.G."/>
            <person name="Dietrich F.S."/>
            <person name="Mulligan J.T."/>
            <person name="Allen E."/>
            <person name="Araujo R."/>
            <person name="Aviles E."/>
            <person name="Berno A."/>
            <person name="Carpenter J."/>
            <person name="Chen E."/>
            <person name="Cherry J.M."/>
            <person name="Chung E."/>
            <person name="Duncan M."/>
            <person name="Hunicke-Smith S."/>
            <person name="Hyman R.W."/>
            <person name="Komp C."/>
            <person name="Lashkari D."/>
            <person name="Lew H."/>
            <person name="Lin D."/>
            <person name="Mosedale D."/>
            <person name="Nakahara K."/>
            <person name="Namath A."/>
            <person name="Oefner P."/>
            <person name="Oh C."/>
            <person name="Petel F.X."/>
            <person name="Roberts D."/>
            <person name="Schramm S."/>
            <person name="Schroeder M."/>
            <person name="Shogren T."/>
            <person name="Shroff N."/>
            <person name="Winant A."/>
            <person name="Yelton M.A."/>
            <person name="Botstein D."/>
            <person name="Davis R.W."/>
            <person name="Johnston M."/>
            <person name="Andrews S."/>
            <person name="Brinkman R."/>
            <person name="Cooper J."/>
            <person name="Ding H."/>
            <person name="Du Z."/>
            <person name="Favello A."/>
            <person name="Fulton L."/>
            <person name="Gattung S."/>
            <person name="Greco T."/>
            <person name="Hallsworth K."/>
            <person name="Hawkins J."/>
            <person name="Hillier L.W."/>
            <person name="Jier M."/>
            <person name="Johnson D."/>
            <person name="Johnston L."/>
            <person name="Kirsten J."/>
            <person name="Kucaba T."/>
            <person name="Langston Y."/>
            <person name="Latreille P."/>
            <person name="Le T."/>
            <person name="Mardis E."/>
            <person name="Menezes S."/>
            <person name="Miller N."/>
            <person name="Nhan M."/>
            <person name="Pauley A."/>
            <person name="Peluso D."/>
            <person name="Rifkin L."/>
            <person name="Riles L."/>
            <person name="Taich A."/>
            <person name="Trevaskis E."/>
            <person name="Vignati D."/>
            <person name="Wilcox L."/>
            <person name="Wohldman P."/>
            <person name="Vaudin M."/>
            <person name="Wilson R."/>
            <person name="Waterston R."/>
            <person name="Albermann K."/>
            <person name="Hani J."/>
            <person name="Heumann K."/>
            <person name="Kleine K."/>
            <person name="Mewes H.-W."/>
            <person name="Zollner A."/>
            <person name="Zaccaria P."/>
        </authorList>
    </citation>
    <scope>NUCLEOTIDE SEQUENCE [LARGE SCALE GENOMIC DNA]</scope>
    <source>
        <strain>ATCC 204508 / S288c</strain>
    </source>
</reference>
<reference key="2">
    <citation type="journal article" date="2014" name="G3 (Bethesda)">
        <title>The reference genome sequence of Saccharomyces cerevisiae: Then and now.</title>
        <authorList>
            <person name="Engel S.R."/>
            <person name="Dietrich F.S."/>
            <person name="Fisk D.G."/>
            <person name="Binkley G."/>
            <person name="Balakrishnan R."/>
            <person name="Costanzo M.C."/>
            <person name="Dwight S.S."/>
            <person name="Hitz B.C."/>
            <person name="Karra K."/>
            <person name="Nash R.S."/>
            <person name="Weng S."/>
            <person name="Wong E.D."/>
            <person name="Lloyd P."/>
            <person name="Skrzypek M.S."/>
            <person name="Miyasato S.R."/>
            <person name="Simison M."/>
            <person name="Cherry J.M."/>
        </authorList>
    </citation>
    <scope>GENOME REANNOTATION</scope>
    <source>
        <strain>ATCC 204508 / S288c</strain>
    </source>
</reference>
<reference key="3">
    <citation type="journal article" date="2003" name="Nature">
        <title>Global analysis of protein expression in yeast.</title>
        <authorList>
            <person name="Ghaemmaghami S."/>
            <person name="Huh W.-K."/>
            <person name="Bower K."/>
            <person name="Howson R.W."/>
            <person name="Belle A."/>
            <person name="Dephoure N."/>
            <person name="O'Shea E.K."/>
            <person name="Weissman J.S."/>
        </authorList>
    </citation>
    <scope>LEVEL OF PROTEIN EXPRESSION [LARGE SCALE ANALYSIS]</scope>
</reference>
<reference key="4">
    <citation type="journal article" date="2007" name="J. Proteome Res.">
        <title>Large-scale phosphorylation analysis of alpha-factor-arrested Saccharomyces cerevisiae.</title>
        <authorList>
            <person name="Li X."/>
            <person name="Gerber S.A."/>
            <person name="Rudner A.D."/>
            <person name="Beausoleil S.A."/>
            <person name="Haas W."/>
            <person name="Villen J."/>
            <person name="Elias J.E."/>
            <person name="Gygi S.P."/>
        </authorList>
    </citation>
    <scope>IDENTIFICATION BY MASS SPECTROMETRY [LARGE SCALE ANALYSIS]</scope>
    <source>
        <strain>ADR376</strain>
    </source>
</reference>
<reference key="5">
    <citation type="journal article" date="2008" name="Mol. Cell. Proteomics">
        <title>A multidimensional chromatography technology for in-depth phosphoproteome analysis.</title>
        <authorList>
            <person name="Albuquerque C.P."/>
            <person name="Smolka M.B."/>
            <person name="Payne S.H."/>
            <person name="Bafna V."/>
            <person name="Eng J."/>
            <person name="Zhou H."/>
        </authorList>
    </citation>
    <scope>PHOSPHORYLATION [LARGE SCALE ANALYSIS] AT SER-241; SER-316; SER-327 AND SER-668</scope>
    <scope>IDENTIFICATION BY MASS SPECTROMETRY [LARGE SCALE ANALYSIS]</scope>
</reference>
<reference key="6">
    <citation type="journal article" date="2009" name="Science">
        <title>Global analysis of Cdk1 substrate phosphorylation sites provides insights into evolution.</title>
        <authorList>
            <person name="Holt L.J."/>
            <person name="Tuch B.B."/>
            <person name="Villen J."/>
            <person name="Johnson A.D."/>
            <person name="Gygi S.P."/>
            <person name="Morgan D.O."/>
        </authorList>
    </citation>
    <scope>PHOSPHORYLATION [LARGE SCALE ANALYSIS] AT SER-238; SER-316; SER-324; SER-327; SER-609; SER-612; SER-668 AND SER-760</scope>
    <scope>IDENTIFICATION BY MASS SPECTROMETRY [LARGE SCALE ANALYSIS]</scope>
</reference>
<reference key="7">
    <citation type="journal article" date="2016" name="J. Biol. Chem.">
        <title>Vtc5, a novel subunit of the vacuolar transporter chaperone complex, regulates polyphosphate synthesis and phosphate homeostasis in yeast.</title>
        <authorList>
            <person name="Desfougeres Y."/>
            <person name="Gerasimaite R.U."/>
            <person name="Jessen H.J."/>
            <person name="Mayer A."/>
        </authorList>
    </citation>
    <scope>FUNCTION</scope>
    <scope>SUBUNIT</scope>
    <scope>SUBCELLULAR LOCATION</scope>
</reference>
<reference key="8">
    <citation type="journal article" date="2021" name="MBio">
        <title>Vtc5 is localized to the vacuole membrane by the conserved AP-3 complex to regulate polyphosphate synthesis in budding yeast.</title>
        <authorList>
            <person name="Bentley-DeSousa A."/>
            <person name="Downey M."/>
        </authorList>
    </citation>
    <scope>SUBCELLULAR LOCATION</scope>
</reference>
<evidence type="ECO:0000255" key="1"/>
<evidence type="ECO:0000255" key="2">
    <source>
        <dbReference type="PROSITE-ProRule" id="PRU00714"/>
    </source>
</evidence>
<evidence type="ECO:0000256" key="3">
    <source>
        <dbReference type="SAM" id="MobiDB-lite"/>
    </source>
</evidence>
<evidence type="ECO:0000269" key="4">
    <source>
    </source>
</evidence>
<evidence type="ECO:0000269" key="5">
    <source>
    </source>
</evidence>
<evidence type="ECO:0000269" key="6">
    <source>
    </source>
</evidence>
<evidence type="ECO:0000303" key="7">
    <source>
    </source>
</evidence>
<evidence type="ECO:0000305" key="8"/>
<evidence type="ECO:0000305" key="9">
    <source>
    </source>
</evidence>
<evidence type="ECO:0007744" key="10">
    <source>
    </source>
</evidence>
<evidence type="ECO:0007744" key="11">
    <source>
    </source>
</evidence>
<organism>
    <name type="scientific">Saccharomyces cerevisiae (strain ATCC 204508 / S288c)</name>
    <name type="common">Baker's yeast</name>
    <dbReference type="NCBI Taxonomy" id="559292"/>
    <lineage>
        <taxon>Eukaryota</taxon>
        <taxon>Fungi</taxon>
        <taxon>Dikarya</taxon>
        <taxon>Ascomycota</taxon>
        <taxon>Saccharomycotina</taxon>
        <taxon>Saccharomycetes</taxon>
        <taxon>Saccharomycetales</taxon>
        <taxon>Saccharomycetaceae</taxon>
        <taxon>Saccharomyces</taxon>
    </lineage>
</organism>
<proteinExistence type="evidence at protein level"/>
<accession>P38966</accession>
<accession>D6VS76</accession>
<accession>Q03192</accession>
<dbReference type="EMBL" id="X82086">
    <property type="protein sequence ID" value="CAA57618.1"/>
    <property type="molecule type" value="Genomic_DNA"/>
</dbReference>
<dbReference type="EMBL" id="Z46796">
    <property type="protein sequence ID" value="CAA86811.1"/>
    <property type="molecule type" value="Genomic_DNA"/>
</dbReference>
<dbReference type="EMBL" id="Z74385">
    <property type="protein sequence ID" value="CAA98910.1"/>
    <property type="molecule type" value="Genomic_DNA"/>
</dbReference>
<dbReference type="EMBL" id="Z50111">
    <property type="protein sequence ID" value="CAA90448.1"/>
    <property type="molecule type" value="Genomic_DNA"/>
</dbReference>
<dbReference type="EMBL" id="BK006938">
    <property type="protein sequence ID" value="DAA11936.1"/>
    <property type="molecule type" value="Genomic_DNA"/>
</dbReference>
<dbReference type="PIR" id="S49844">
    <property type="entry name" value="S49844"/>
</dbReference>
<dbReference type="RefSeq" id="NP_010374.1">
    <property type="nucleotide sequence ID" value="NM_001180397.1"/>
</dbReference>
<dbReference type="SMR" id="P38966"/>
<dbReference type="BioGRID" id="32146">
    <property type="interactions" value="104"/>
</dbReference>
<dbReference type="FunCoup" id="P38966">
    <property type="interactions" value="54"/>
</dbReference>
<dbReference type="IntAct" id="P38966">
    <property type="interactions" value="29"/>
</dbReference>
<dbReference type="STRING" id="4932.YDR089W"/>
<dbReference type="iPTMnet" id="P38966"/>
<dbReference type="PaxDb" id="4932-YDR089W"/>
<dbReference type="PeptideAtlas" id="P38966"/>
<dbReference type="EnsemblFungi" id="YDR089W_mRNA">
    <property type="protein sequence ID" value="YDR089W"/>
    <property type="gene ID" value="YDR089W"/>
</dbReference>
<dbReference type="GeneID" id="851663"/>
<dbReference type="KEGG" id="sce:YDR089W"/>
<dbReference type="AGR" id="SGD:S000002496"/>
<dbReference type="SGD" id="S000002496">
    <property type="gene designation" value="VTC5"/>
</dbReference>
<dbReference type="VEuPathDB" id="FungiDB:YDR089W"/>
<dbReference type="eggNOG" id="ENOG502QSRA">
    <property type="taxonomic scope" value="Eukaryota"/>
</dbReference>
<dbReference type="HOGENOM" id="CLU_016933_0_0_1"/>
<dbReference type="InParanoid" id="P38966"/>
<dbReference type="OMA" id="IRYWNEF"/>
<dbReference type="OrthoDB" id="5588846at2759"/>
<dbReference type="BioCyc" id="YEAST:G3O-29694-MONOMER"/>
<dbReference type="BioGRID-ORCS" id="851663">
    <property type="hits" value="1 hit in 10 CRISPR screens"/>
</dbReference>
<dbReference type="PRO" id="PR:P38966"/>
<dbReference type="Proteomes" id="UP000002311">
    <property type="component" value="Chromosome IV"/>
</dbReference>
<dbReference type="RNAct" id="P38966">
    <property type="molecule type" value="protein"/>
</dbReference>
<dbReference type="GO" id="GO:0005783">
    <property type="term" value="C:endoplasmic reticulum"/>
    <property type="evidence" value="ECO:0000318"/>
    <property type="project" value="GO_Central"/>
</dbReference>
<dbReference type="GO" id="GO:0000329">
    <property type="term" value="C:fungal-type vacuole membrane"/>
    <property type="evidence" value="ECO:0000314"/>
    <property type="project" value="SGD"/>
</dbReference>
<dbReference type="GO" id="GO:0033254">
    <property type="term" value="C:vacuolar transporter chaperone complex"/>
    <property type="evidence" value="ECO:0000353"/>
    <property type="project" value="SGD"/>
</dbReference>
<dbReference type="GO" id="GO:0030643">
    <property type="term" value="P:intracellular phosphate ion homeostasis"/>
    <property type="evidence" value="ECO:0000315"/>
    <property type="project" value="SGD"/>
</dbReference>
<dbReference type="GO" id="GO:0006799">
    <property type="term" value="P:polyphosphate biosynthetic process"/>
    <property type="evidence" value="ECO:0000315"/>
    <property type="project" value="SGD"/>
</dbReference>
<dbReference type="CDD" id="cd14474">
    <property type="entry name" value="SPX_YDR089W"/>
    <property type="match status" value="1"/>
</dbReference>
<dbReference type="InterPro" id="IPR004331">
    <property type="entry name" value="SPX_dom"/>
</dbReference>
<dbReference type="InterPro" id="IPR051572">
    <property type="entry name" value="VTC_Complex_Subunit"/>
</dbReference>
<dbReference type="PANTHER" id="PTHR46140">
    <property type="entry name" value="VACUOLAR TRANSPORTER CHAPERONE 1-RELATED"/>
    <property type="match status" value="1"/>
</dbReference>
<dbReference type="PANTHER" id="PTHR46140:SF1">
    <property type="entry name" value="VACUOLAR TRANSPORTER CHAPERONE COMPLEX SUBUNIT 4-RELATED"/>
    <property type="match status" value="1"/>
</dbReference>
<dbReference type="PROSITE" id="PS51382">
    <property type="entry name" value="SPX"/>
    <property type="match status" value="1"/>
</dbReference>
<keyword id="KW-0472">Membrane</keyword>
<keyword id="KW-0597">Phosphoprotein</keyword>
<keyword id="KW-1185">Reference proteome</keyword>
<keyword id="KW-0812">Transmembrane</keyword>
<keyword id="KW-1133">Transmembrane helix</keyword>
<keyword id="KW-0926">Vacuole</keyword>
<protein>
    <recommendedName>
        <fullName evidence="8">Vacuole transporter chaperone complex subunit 5</fullName>
    </recommendedName>
    <alternativeName>
        <fullName evidence="7">Vacuolar membrane polyphosphate polymerase regulatory subunit 5</fullName>
        <shortName>PolyP polymerase</shortName>
    </alternativeName>
</protein>
<sequence>MKFEDRILNKSIPEWKFYNINYEKLKVAIKKVTAYDYDNPNDSGMEKLLNQCSVAFDQEFQNVNLFVSLKIKEISTRILSVESSIIDFSKGLNKTSRNRFNLRKLKIINAHVDDCNFELQLLSRFLIIQRIALRKLFKKLLNEFPQDSENPLTASEYVTSIRNSESLRNGHEGISFMKLDLDPYLLEVSLIVDVLHDLENKLEDATEPAVEQRSLNRSDESAHTSSSPEANNSSLPASPRSIPLLSNKKTSKMIDSSLEFDTALIDKAENLGRFLLSSEDIEGLKFMLLNIGFRIIDDSIISTSKEILDTTDNINSAGNKSIRSAKSFNDLQHTLSLSKQKNILPSAVQSNEKYVSISILDTVGNEGSPLLLTDDNINQHPNMIVSSTAEDTCIVMCHVGGLRNHVVTNDLLLRDVKNILSAMRSGNDTKNISALINSLDPSPISKIALEWIQSHRLKTIEPKLDFKRTRFISADNGDIYLIALDESITIGNVSTLPFPILEIKKLSRSSGLSQTAINEDNKFKQLMKSVVTNEFQCSLIPPDLTTWKICLELVHSNELQNDLFQLLLRDQYKLNSDDSLSPDEFFQLGKDRLEEEFDLTGPINNSQGSVDSGRRVRIHKKSKQSDNETKKKPIRYWNEFDEQEEDNLDNAFYIDTNGSRSTTDNEESLLLRNSPPDYGFILFSRNFINRTYDFCEKLRNLIRHDKKTSPDLFQNSKHPHCSSTNYGSVASFGSQSTSASYDDVQRYLQYQQQDIEDSQSIYEYRHDEVVTFLYLSALLTSCIMASVCLGIVLSLFRGQSNNEIDLEIQNILIAIIIISLLVSLILICACLLLLFSRFTLAPIWHYVGCFTMFFSVTGTVCYGMIEIFF</sequence>
<name>VTC5_YEAST</name>